<accession>Q9R0Q3</accession>
<dbReference type="EMBL" id="AB025218">
    <property type="protein sequence ID" value="BAA84689.1"/>
    <property type="molecule type" value="mRNA"/>
</dbReference>
<dbReference type="EMBL" id="BC083140">
    <property type="protein sequence ID" value="AAH83140.1"/>
    <property type="molecule type" value="mRNA"/>
</dbReference>
<dbReference type="CCDS" id="CCDS19679.1"/>
<dbReference type="RefSeq" id="NP_062744.1">
    <property type="nucleotide sequence ID" value="NM_019770.3"/>
</dbReference>
<dbReference type="RefSeq" id="XP_003945495.1">
    <property type="nucleotide sequence ID" value="XM_003945446.4"/>
</dbReference>
<dbReference type="SMR" id="Q9R0Q3"/>
<dbReference type="BioGRID" id="207909">
    <property type="interactions" value="119"/>
</dbReference>
<dbReference type="FunCoup" id="Q9R0Q3">
    <property type="interactions" value="4113"/>
</dbReference>
<dbReference type="IntAct" id="Q9R0Q3">
    <property type="interactions" value="120"/>
</dbReference>
<dbReference type="STRING" id="10090.ENSMUSP00000054834"/>
<dbReference type="iPTMnet" id="Q9R0Q3"/>
<dbReference type="PhosphoSitePlus" id="Q9R0Q3"/>
<dbReference type="SwissPalm" id="Q9R0Q3"/>
<dbReference type="jPOST" id="Q9R0Q3"/>
<dbReference type="PaxDb" id="10090-ENSMUSP00000054834"/>
<dbReference type="PeptideAtlas" id="Q9R0Q3"/>
<dbReference type="ProteomicsDB" id="259574"/>
<dbReference type="Pumba" id="Q9R0Q3"/>
<dbReference type="Antibodypedia" id="2983">
    <property type="antibodies" value="150 antibodies from 25 providers"/>
</dbReference>
<dbReference type="DNASU" id="56334"/>
<dbReference type="Ensembl" id="ENSMUST00000060226.11">
    <property type="protein sequence ID" value="ENSMUSP00000054834.5"/>
    <property type="gene ID" value="ENSMUSG00000029390.14"/>
</dbReference>
<dbReference type="GeneID" id="56334"/>
<dbReference type="KEGG" id="mmu:56334"/>
<dbReference type="UCSC" id="uc008zqa.1">
    <property type="organism name" value="mouse"/>
</dbReference>
<dbReference type="AGR" id="MGI:1929269"/>
<dbReference type="CTD" id="10959"/>
<dbReference type="MGI" id="MGI:1929269">
    <property type="gene designation" value="Tmed2"/>
</dbReference>
<dbReference type="VEuPathDB" id="HostDB:ENSMUSG00000029390"/>
<dbReference type="eggNOG" id="KOG1692">
    <property type="taxonomic scope" value="Eukaryota"/>
</dbReference>
<dbReference type="GeneTree" id="ENSGT00940000155143"/>
<dbReference type="InParanoid" id="Q9R0Q3"/>
<dbReference type="OMA" id="MQVRDRN"/>
<dbReference type="OrthoDB" id="1929172at2759"/>
<dbReference type="PhylomeDB" id="Q9R0Q3"/>
<dbReference type="TreeFam" id="TF313000"/>
<dbReference type="Reactome" id="R-MMU-1912420">
    <property type="pathway name" value="Pre-NOTCH Processing in Golgi"/>
</dbReference>
<dbReference type="Reactome" id="R-MMU-204005">
    <property type="pathway name" value="COPII-mediated vesicle transport"/>
</dbReference>
<dbReference type="Reactome" id="R-MMU-5694530">
    <property type="pathway name" value="Cargo concentration in the ER"/>
</dbReference>
<dbReference type="Reactome" id="R-MMU-6807878">
    <property type="pathway name" value="COPI-mediated anterograde transport"/>
</dbReference>
<dbReference type="Reactome" id="R-MMU-6811434">
    <property type="pathway name" value="COPI-dependent Golgi-to-ER retrograde traffic"/>
</dbReference>
<dbReference type="BioGRID-ORCS" id="100862175">
    <property type="hits" value="0 hits in 1 CRISPR screen"/>
</dbReference>
<dbReference type="BioGRID-ORCS" id="56334">
    <property type="hits" value="18 hits in 76 CRISPR screens"/>
</dbReference>
<dbReference type="ChiTaRS" id="Tmed2">
    <property type="organism name" value="mouse"/>
</dbReference>
<dbReference type="PRO" id="PR:Q9R0Q3"/>
<dbReference type="Proteomes" id="UP000000589">
    <property type="component" value="Chromosome 5"/>
</dbReference>
<dbReference type="RNAct" id="Q9R0Q3">
    <property type="molecule type" value="protein"/>
</dbReference>
<dbReference type="Bgee" id="ENSMUSG00000029390">
    <property type="expression patterns" value="Expressed in ectoplacental cone and 104 other cell types or tissues"/>
</dbReference>
<dbReference type="ExpressionAtlas" id="Q9R0Q3">
    <property type="expression patterns" value="baseline and differential"/>
</dbReference>
<dbReference type="GO" id="GO:0030137">
    <property type="term" value="C:COPI-coated vesicle"/>
    <property type="evidence" value="ECO:0000250"/>
    <property type="project" value="UniProtKB"/>
</dbReference>
<dbReference type="GO" id="GO:0030663">
    <property type="term" value="C:COPI-coated vesicle membrane"/>
    <property type="evidence" value="ECO:0007669"/>
    <property type="project" value="UniProtKB-SubCell"/>
</dbReference>
<dbReference type="GO" id="GO:0005783">
    <property type="term" value="C:endoplasmic reticulum"/>
    <property type="evidence" value="ECO:0000250"/>
    <property type="project" value="UniProtKB"/>
</dbReference>
<dbReference type="GO" id="GO:0005789">
    <property type="term" value="C:endoplasmic reticulum membrane"/>
    <property type="evidence" value="ECO:0000314"/>
    <property type="project" value="MGI"/>
</dbReference>
<dbReference type="GO" id="GO:0005793">
    <property type="term" value="C:endoplasmic reticulum-Golgi intermediate compartment"/>
    <property type="evidence" value="ECO:0000314"/>
    <property type="project" value="MGI"/>
</dbReference>
<dbReference type="GO" id="GO:0033116">
    <property type="term" value="C:endoplasmic reticulum-Golgi intermediate compartment membrane"/>
    <property type="evidence" value="ECO:0007669"/>
    <property type="project" value="UniProtKB-SubCell"/>
</dbReference>
<dbReference type="GO" id="GO:0005794">
    <property type="term" value="C:Golgi apparatus"/>
    <property type="evidence" value="ECO:0000314"/>
    <property type="project" value="MGI"/>
</dbReference>
<dbReference type="GO" id="GO:0032580">
    <property type="term" value="C:Golgi cisterna membrane"/>
    <property type="evidence" value="ECO:0007669"/>
    <property type="project" value="UniProtKB-SubCell"/>
</dbReference>
<dbReference type="GO" id="GO:0016020">
    <property type="term" value="C:membrane"/>
    <property type="evidence" value="ECO:0000250"/>
    <property type="project" value="HGNC-UCL"/>
</dbReference>
<dbReference type="GO" id="GO:0042589">
    <property type="term" value="C:zymogen granule membrane"/>
    <property type="evidence" value="ECO:0000250"/>
    <property type="project" value="HGNC-UCL"/>
</dbReference>
<dbReference type="GO" id="GO:0005109">
    <property type="term" value="F:frizzled binding"/>
    <property type="evidence" value="ECO:0000353"/>
    <property type="project" value="MGI"/>
</dbReference>
<dbReference type="GO" id="GO:0005119">
    <property type="term" value="F:smoothened binding"/>
    <property type="evidence" value="ECO:0000353"/>
    <property type="project" value="MGI"/>
</dbReference>
<dbReference type="GO" id="GO:1905069">
    <property type="term" value="P:allantois development"/>
    <property type="evidence" value="ECO:0000315"/>
    <property type="project" value="MGI"/>
</dbReference>
<dbReference type="GO" id="GO:0060670">
    <property type="term" value="P:branching involved in labyrinthine layer morphogenesis"/>
    <property type="evidence" value="ECO:0000315"/>
    <property type="project" value="MGI"/>
</dbReference>
<dbReference type="GO" id="GO:0060717">
    <property type="term" value="P:chorion development"/>
    <property type="evidence" value="ECO:0000315"/>
    <property type="project" value="MGI"/>
</dbReference>
<dbReference type="GO" id="GO:0048598">
    <property type="term" value="P:embryonic morphogenesis"/>
    <property type="evidence" value="ECO:0000315"/>
    <property type="project" value="UniProtKB"/>
</dbReference>
<dbReference type="GO" id="GO:0001892">
    <property type="term" value="P:embryonic placenta development"/>
    <property type="evidence" value="ECO:0000315"/>
    <property type="project" value="MGI"/>
</dbReference>
<dbReference type="GO" id="GO:0090158">
    <property type="term" value="P:endoplasmic reticulum membrane organization"/>
    <property type="evidence" value="ECO:0000315"/>
    <property type="project" value="MGI"/>
</dbReference>
<dbReference type="GO" id="GO:0007029">
    <property type="term" value="P:endoplasmic reticulum organization"/>
    <property type="evidence" value="ECO:0000315"/>
    <property type="project" value="MGI"/>
</dbReference>
<dbReference type="GO" id="GO:0007030">
    <property type="term" value="P:Golgi organization"/>
    <property type="evidence" value="ECO:0000250"/>
    <property type="project" value="UniProtKB"/>
</dbReference>
<dbReference type="GO" id="GO:0001947">
    <property type="term" value="P:heart looping"/>
    <property type="evidence" value="ECO:0000315"/>
    <property type="project" value="MGI"/>
</dbReference>
<dbReference type="GO" id="GO:0001701">
    <property type="term" value="P:in utero embryonic development"/>
    <property type="evidence" value="ECO:0000315"/>
    <property type="project" value="MGI"/>
</dbReference>
<dbReference type="GO" id="GO:0006954">
    <property type="term" value="P:inflammatory response"/>
    <property type="evidence" value="ECO:0000315"/>
    <property type="project" value="MGI"/>
</dbReference>
<dbReference type="GO" id="GO:0006886">
    <property type="term" value="P:intracellular protein transport"/>
    <property type="evidence" value="ECO:0007669"/>
    <property type="project" value="Ensembl"/>
</dbReference>
<dbReference type="GO" id="GO:0060716">
    <property type="term" value="P:labyrinthine layer blood vessel development"/>
    <property type="evidence" value="ECO:0000315"/>
    <property type="project" value="CACAO"/>
</dbReference>
<dbReference type="GO" id="GO:0072595">
    <property type="term" value="P:maintenance of protein localization in organelle"/>
    <property type="evidence" value="ECO:0000315"/>
    <property type="project" value="MGI"/>
</dbReference>
<dbReference type="GO" id="GO:0001893">
    <property type="term" value="P:maternal placenta development"/>
    <property type="evidence" value="ECO:0000315"/>
    <property type="project" value="UniProtKB"/>
</dbReference>
<dbReference type="GO" id="GO:0035264">
    <property type="term" value="P:multicellular organism growth"/>
    <property type="evidence" value="ECO:0000315"/>
    <property type="project" value="MGI"/>
</dbReference>
<dbReference type="GO" id="GO:0034260">
    <property type="term" value="P:negative regulation of GTPase activity"/>
    <property type="evidence" value="ECO:0000250"/>
    <property type="project" value="UniProtKB"/>
</dbReference>
<dbReference type="GO" id="GO:1903077">
    <property type="term" value="P:negative regulation of protein localization to plasma membrane"/>
    <property type="evidence" value="ECO:0000315"/>
    <property type="project" value="MGI"/>
</dbReference>
<dbReference type="GO" id="GO:0045879">
    <property type="term" value="P:negative regulation of smoothened signaling pathway"/>
    <property type="evidence" value="ECO:0000315"/>
    <property type="project" value="MGI"/>
</dbReference>
<dbReference type="GO" id="GO:0001843">
    <property type="term" value="P:neural tube closure"/>
    <property type="evidence" value="ECO:0000315"/>
    <property type="project" value="MGI"/>
</dbReference>
<dbReference type="GO" id="GO:0036499">
    <property type="term" value="P:PERK-mediated unfolded protein response"/>
    <property type="evidence" value="ECO:0000315"/>
    <property type="project" value="MGI"/>
</dbReference>
<dbReference type="GO" id="GO:0010628">
    <property type="term" value="P:positive regulation of gene expression"/>
    <property type="evidence" value="ECO:0000315"/>
    <property type="project" value="MGI"/>
</dbReference>
<dbReference type="GO" id="GO:0036342">
    <property type="term" value="P:post-anal tail morphogenesis"/>
    <property type="evidence" value="ECO:0000315"/>
    <property type="project" value="MGI"/>
</dbReference>
<dbReference type="GO" id="GO:0008104">
    <property type="term" value="P:protein localization"/>
    <property type="evidence" value="ECO:0000315"/>
    <property type="project" value="MGI"/>
</dbReference>
<dbReference type="GO" id="GO:0072659">
    <property type="term" value="P:protein localization to plasma membrane"/>
    <property type="evidence" value="ECO:0000250"/>
    <property type="project" value="UniProtKB"/>
</dbReference>
<dbReference type="GO" id="GO:0009306">
    <property type="term" value="P:protein secretion"/>
    <property type="evidence" value="ECO:0000315"/>
    <property type="project" value="MGI"/>
</dbReference>
<dbReference type="GO" id="GO:2000638">
    <property type="term" value="P:regulation of SREBP signaling pathway"/>
    <property type="evidence" value="ECO:0000315"/>
    <property type="project" value="MGI"/>
</dbReference>
<dbReference type="GO" id="GO:0032525">
    <property type="term" value="P:somite rostral/caudal axis specification"/>
    <property type="evidence" value="ECO:0000315"/>
    <property type="project" value="MGI"/>
</dbReference>
<dbReference type="GO" id="GO:0001756">
    <property type="term" value="P:somitogenesis"/>
    <property type="evidence" value="ECO:0000315"/>
    <property type="project" value="MGI"/>
</dbReference>
<dbReference type="GO" id="GO:0016192">
    <property type="term" value="P:vesicle-mediated transport"/>
    <property type="evidence" value="ECO:0007669"/>
    <property type="project" value="UniProtKB-KW"/>
</dbReference>
<dbReference type="InterPro" id="IPR015720">
    <property type="entry name" value="Emp24-like"/>
</dbReference>
<dbReference type="InterPro" id="IPR009038">
    <property type="entry name" value="GOLD_dom"/>
</dbReference>
<dbReference type="InterPro" id="IPR036598">
    <property type="entry name" value="GOLD_dom_sf"/>
</dbReference>
<dbReference type="PANTHER" id="PTHR22811">
    <property type="entry name" value="TRANSMEMBRANE EMP24 DOMAIN-CONTAINING PROTEIN"/>
    <property type="match status" value="1"/>
</dbReference>
<dbReference type="Pfam" id="PF01105">
    <property type="entry name" value="EMP24_GP25L"/>
    <property type="match status" value="1"/>
</dbReference>
<dbReference type="SMART" id="SM01190">
    <property type="entry name" value="EMP24_GP25L"/>
    <property type="match status" value="1"/>
</dbReference>
<dbReference type="SUPFAM" id="SSF101576">
    <property type="entry name" value="Supernatant protein factor (SPF), C-terminal domain"/>
    <property type="match status" value="1"/>
</dbReference>
<dbReference type="PROSITE" id="PS50866">
    <property type="entry name" value="GOLD"/>
    <property type="match status" value="1"/>
</dbReference>
<feature type="signal peptide" evidence="4">
    <location>
        <begin position="1"/>
        <end position="20"/>
    </location>
</feature>
<feature type="chain" id="PRO_0000010382" description="Transmembrane emp24 domain-containing protein 2">
    <location>
        <begin position="21"/>
        <end position="201"/>
    </location>
</feature>
<feature type="topological domain" description="Lumenal" evidence="4">
    <location>
        <begin position="21"/>
        <end position="168"/>
    </location>
</feature>
<feature type="transmembrane region" description="Helical" evidence="4">
    <location>
        <begin position="169"/>
        <end position="189"/>
    </location>
</feature>
<feature type="topological domain" description="Cytoplasmic" evidence="4">
    <location>
        <begin position="190"/>
        <end position="201"/>
    </location>
</feature>
<feature type="domain" description="GOLD" evidence="5">
    <location>
        <begin position="30"/>
        <end position="112"/>
    </location>
</feature>
<feature type="region of interest" description="Interaction with F2RL1" evidence="1">
    <location>
        <begin position="1"/>
        <end position="181"/>
    </location>
</feature>
<feature type="region of interest" description="Required for TMED10 and TMED2 cis-Golgi network localization" evidence="1">
    <location>
        <begin position="118"/>
        <end position="157"/>
    </location>
</feature>
<feature type="coiled-coil region" evidence="4">
    <location>
        <begin position="117"/>
        <end position="167"/>
    </location>
</feature>
<feature type="short sequence motif" description="COPI vesicle coat-binding" evidence="4">
    <location>
        <begin position="194"/>
        <end position="201"/>
    </location>
</feature>
<feature type="short sequence motif" description="COPII vesicle coat-binding" evidence="4">
    <location>
        <begin position="194"/>
        <end position="195"/>
    </location>
</feature>
<feature type="mutagenesis site" description="Embryonic lethal." evidence="6">
    <original>L</original>
    <variation>E</variation>
    <location>
        <position position="15"/>
    </location>
</feature>
<organism>
    <name type="scientific">Mus musculus</name>
    <name type="common">Mouse</name>
    <dbReference type="NCBI Taxonomy" id="10090"/>
    <lineage>
        <taxon>Eukaryota</taxon>
        <taxon>Metazoa</taxon>
        <taxon>Chordata</taxon>
        <taxon>Craniata</taxon>
        <taxon>Vertebrata</taxon>
        <taxon>Euteleostomi</taxon>
        <taxon>Mammalia</taxon>
        <taxon>Eutheria</taxon>
        <taxon>Euarchontoglires</taxon>
        <taxon>Glires</taxon>
        <taxon>Rodentia</taxon>
        <taxon>Myomorpha</taxon>
        <taxon>Muroidea</taxon>
        <taxon>Muridae</taxon>
        <taxon>Murinae</taxon>
        <taxon>Mus</taxon>
        <taxon>Mus</taxon>
    </lineage>
</organism>
<keyword id="KW-0175">Coiled coil</keyword>
<keyword id="KW-0968">Cytoplasmic vesicle</keyword>
<keyword id="KW-0256">Endoplasmic reticulum</keyword>
<keyword id="KW-0931">ER-Golgi transport</keyword>
<keyword id="KW-0333">Golgi apparatus</keyword>
<keyword id="KW-0472">Membrane</keyword>
<keyword id="KW-0653">Protein transport</keyword>
<keyword id="KW-1185">Reference proteome</keyword>
<keyword id="KW-0732">Signal</keyword>
<keyword id="KW-0812">Transmembrane</keyword>
<keyword id="KW-1133">Transmembrane helix</keyword>
<keyword id="KW-0813">Transport</keyword>
<gene>
    <name type="primary">Tmed2</name>
    <name type="synonym">Rnp24</name>
    <name type="synonym">Sid394</name>
</gene>
<sequence>MVTLAELLALLAALLATASGYFVSIDAHAEECFFERVTSGTKMGLIFEVAEGGFLDIDVEITGPDNKGIYKGDRESSGKYTFAAHMDGTYKFCFSNRMSTMTPKIVMFTIDIGEAPKGQDMETEAHQNKLEEMINELAVAMTAVKHEQEYMEVRERIHRAINDNTNSRVVLWSFFEALVLVAMTLGQIYYLKRFFEVRRVV</sequence>
<evidence type="ECO:0000250" key="1"/>
<evidence type="ECO:0000250" key="2">
    <source>
        <dbReference type="UniProtKB" id="Q15363"/>
    </source>
</evidence>
<evidence type="ECO:0000250" key="3">
    <source>
        <dbReference type="UniProtKB" id="Q63524"/>
    </source>
</evidence>
<evidence type="ECO:0000255" key="4"/>
<evidence type="ECO:0000255" key="5">
    <source>
        <dbReference type="PROSITE-ProRule" id="PRU00096"/>
    </source>
</evidence>
<evidence type="ECO:0000269" key="6">
    <source>
    </source>
</evidence>
<evidence type="ECO:0000305" key="7"/>
<comment type="function">
    <text evidence="1 6">Involved in vesicular protein trafficking. Mainly functions in the early secretory pathway but also in post-Golgi membranes. Thought to act as cargo receptor at the lumenal side for incorporation of secretory cargo molecules into transport vesicles and to be involved in vesicle coat formation at the cytoplasmic side. In COPII vesicle-mediated anterograde transport involved in the transport of GPI-anchored proteins and proposed to act together with TMED10 as their cargo receptor; the function specifically implies SEC24C and SEC24D of the COPII vesicle coat and lipid raft-like microdomains of the ER. Recognizes GPI anchors structural remodeled in the ER by PGAP1 and MPPE1. In COPI vesicle-mediated retrograde transport inhibits the GTPase-activating activity of ARFGAP1 towards ARF1 thus preventing immature uncoating and allowing cargo selection to take place. Involved in trafficking of G protein-coupled receptors (GPCRs). Regulates F2RL1, OPRM1 and P2RY4 exocytic trafficking from the Golgi to the plasma membrane thus contributing to receptor resensitization. Facilitates CASR maturation and stabilization in the early secretory pathway and increases CASR plasma membrane targeting. Proposed to be involved in organization of intracellular membranes such as the maintenance of the Golgi apparatus. May also play a role in the biosynthesis of secreted cargo such as eventual processing (By similarity). Required for morphogenesis of embryo and placenta.</text>
</comment>
<comment type="subunit">
    <text evidence="2 3">Monomer and homodimer in the endoplasmic reticulum, endoplasmic reticulum-Golgi intermediate compartment and Golgi. Probably oligomerizes with other members of the EMP24/GP25L family such as TMED7, TMED9 and TMED10. Interacts (via GOLD domain) with TMED10 (via GOLD domain). Associates with the COPI vesicle coat (coatomer); TMED10:TMED2 heterotetramers are proposed to be involved in coatomer association. Interacts (via C-terminus) with COPG1; the interaction involves dimeric TMED2. Interacts with SEC23A; indicative for an association of TMED2 with the COPII vesicle coat. Interacts with ARF1 and ARFGAP1. Interacts with CD59, SEC24A, SEC24B, SEC24C, SEC24D and ATL1. Interacts with KDELR1; the interaction is decreased by KDEL ligand. Interacts with F2RL1; the interaction occurs at the Golgi apparatus. Interacts with CASR (immaturely glycosylated form); the interaction occurs in the endoplasmic reticulum-Golgi intermediate compartment or cis-Golgi. Interacts with F2RL1; the interaction occurs at the Golgi apparatus. Interacts with GORASP1 and GORASP2. Found in a complex composed at least of SURF4, TMED2 and TMED10 (By similarity).</text>
</comment>
<comment type="subcellular location">
    <subcellularLocation>
        <location evidence="2">Cytoplasmic vesicle membrane</location>
        <topology evidence="4">Single-pass type I membrane protein</topology>
    </subcellularLocation>
    <subcellularLocation>
        <location evidence="2">Cytoplasmic vesicle</location>
        <location evidence="2">COPI-coated vesicle membrane</location>
        <topology evidence="4">Single-pass type I membrane protein</topology>
    </subcellularLocation>
    <subcellularLocation>
        <location evidence="2">Golgi apparatus</location>
        <location evidence="2">cis-Golgi network membrane</location>
        <topology evidence="4">Single-pass type I membrane protein</topology>
    </subcellularLocation>
    <subcellularLocation>
        <location evidence="2">Golgi apparatus</location>
        <location evidence="2">Golgi stack membrane</location>
        <topology evidence="4">Single-pass type I membrane protein</topology>
    </subcellularLocation>
    <subcellularLocation>
        <location evidence="2">Endoplasmic reticulum membrane</location>
        <topology evidence="4">Single-pass type I membrane protein</topology>
    </subcellularLocation>
    <subcellularLocation>
        <location evidence="2">Endoplasmic reticulum-Golgi intermediate compartment membrane</location>
        <topology evidence="4">Single-pass type I membrane protein</topology>
    </subcellularLocation>
    <text evidence="2">Cycles between compartments of the early secretatory pathway.</text>
</comment>
<comment type="developmental stage">
    <text evidence="6">Expressed during embryonal and placental development.</text>
</comment>
<comment type="miscellaneous">
    <text>Embryonic lethal for homozygotes with Glu-15 in the signal peptide. Animals do not show Tmed2 protein expression and also have reduced protein levels of Tmed7 and Tmed10. Prior to death at mid-gestation, embryos exhibit developmental delay, abnormal rostral-caudal elongation, randomized heart looping, and absence of the labyrinth layer of the placenta.</text>
</comment>
<comment type="similarity">
    <text evidence="7">Belongs to the EMP24/GP25L family.</text>
</comment>
<proteinExistence type="evidence at protein level"/>
<reference key="1">
    <citation type="submission" date="1999-03" db="EMBL/GenBank/DDBJ databases">
        <title>Mouse mRNA for transmembrane protein.</title>
        <authorList>
            <person name="Seki N."/>
            <person name="Hattori A."/>
            <person name="Hayashi A."/>
            <person name="Kozuma S."/>
            <person name="Muramatsu M."/>
            <person name="Saito T."/>
        </authorList>
    </citation>
    <scope>NUCLEOTIDE SEQUENCE [MRNA]</scope>
</reference>
<reference key="2">
    <citation type="journal article" date="2004" name="Genome Res.">
        <title>The status, quality, and expansion of the NIH full-length cDNA project: the Mammalian Gene Collection (MGC).</title>
        <authorList>
            <consortium name="The MGC Project Team"/>
        </authorList>
    </citation>
    <scope>NUCLEOTIDE SEQUENCE [LARGE SCALE MRNA]</scope>
    <source>
        <strain>FVB/N-3</strain>
        <tissue>Mammary gland</tissue>
    </source>
</reference>
<reference key="3">
    <citation type="journal article" date="2010" name="Cell">
        <title>A tissue-specific atlas of mouse protein phosphorylation and expression.</title>
        <authorList>
            <person name="Huttlin E.L."/>
            <person name="Jedrychowski M.P."/>
            <person name="Elias J.E."/>
            <person name="Goswami T."/>
            <person name="Rad R."/>
            <person name="Beausoleil S.A."/>
            <person name="Villen J."/>
            <person name="Haas W."/>
            <person name="Sowa M.E."/>
            <person name="Gygi S.P."/>
        </authorList>
    </citation>
    <scope>IDENTIFICATION BY MASS SPECTROMETRY [LARGE SCALE ANALYSIS]</scope>
    <source>
        <tissue>Brain</tissue>
        <tissue>Brown adipose tissue</tissue>
        <tissue>Heart</tissue>
        <tissue>Kidney</tissue>
        <tissue>Liver</tissue>
        <tissue>Lung</tissue>
        <tissue>Pancreas</tissue>
        <tissue>Spleen</tissue>
        <tissue>Testis</tissue>
    </source>
</reference>
<reference key="4">
    <citation type="journal article" date="2010" name="Dev. Biol.">
        <title>The trafficking protein Tmed2/p24beta(1) is required for morphogenesis of the mouse embryo and placenta.</title>
        <authorList>
            <person name="Jerome-Majewska L.A."/>
            <person name="Achkar T."/>
            <person name="Luo L."/>
            <person name="Lupu F."/>
            <person name="Lacy E."/>
        </authorList>
    </citation>
    <scope>FUNCTION</scope>
    <scope>DEVELOPMENTAL STAGE</scope>
    <scope>MUTAGENESIS OF LEU-15</scope>
</reference>
<protein>
    <recommendedName>
        <fullName>Transmembrane emp24 domain-containing protein 2</fullName>
    </recommendedName>
    <alternativeName>
        <fullName>COPI-coated vesicle membrane protein p24</fullName>
    </alternativeName>
    <alternativeName>
        <fullName>Membrane protein p24A</fullName>
    </alternativeName>
    <alternativeName>
        <fullName>Sid 394</fullName>
    </alternativeName>
    <alternativeName>
        <fullName>p24 family protein beta-1</fullName>
        <shortName>p24beta1</shortName>
    </alternativeName>
</protein>
<name>TMED2_MOUSE</name>